<gene>
    <name type="primary">ND5</name>
</gene>
<feature type="chain" id="PRO_0000118135" description="NADH-ubiquinone oxidoreductase chain 5">
    <location>
        <begin position="1"/>
        <end position="30" status="greater than"/>
    </location>
</feature>
<feature type="transmembrane region" description="Helical" evidence="2">
    <location>
        <begin position="7"/>
        <end position="27"/>
    </location>
</feature>
<feature type="non-terminal residue">
    <location>
        <position position="30"/>
    </location>
</feature>
<evidence type="ECO:0000250" key="1"/>
<evidence type="ECO:0000255" key="2"/>
<evidence type="ECO:0000305" key="3"/>
<name>NU5M_PISOC</name>
<protein>
    <recommendedName>
        <fullName>NADH-ubiquinone oxidoreductase chain 5</fullName>
        <ecNumber>7.1.1.2</ecNumber>
    </recommendedName>
    <alternativeName>
        <fullName>NADH dehydrogenase subunit 5</fullName>
    </alternativeName>
</protein>
<organism>
    <name type="scientific">Pisaster ochraceus</name>
    <name type="common">Ochre sea star</name>
    <name type="synonym">Asterias ochracea</name>
    <dbReference type="NCBI Taxonomy" id="7612"/>
    <lineage>
        <taxon>Eukaryota</taxon>
        <taxon>Metazoa</taxon>
        <taxon>Echinodermata</taxon>
        <taxon>Eleutherozoa</taxon>
        <taxon>Asterozoa</taxon>
        <taxon>Asteroidea</taxon>
        <taxon>Forcipulatacea</taxon>
        <taxon>Forcipulatida</taxon>
        <taxon>Asteriidae</taxon>
        <taxon>Pisaster</taxon>
    </lineage>
</organism>
<proteinExistence type="inferred from homology"/>
<geneLocation type="mitochondrion"/>
<reference key="1">
    <citation type="journal article" date="1990" name="J. Mol. Evol.">
        <title>Nucleotide sequence of nine protein-coding genes and 22 tRNAs in the mitochondrial DNA of the sea star Pisaster ochraceus.</title>
        <authorList>
            <person name="Smith M.J."/>
            <person name="Banfield D.K."/>
            <person name="Doteval K."/>
            <person name="Gorski S."/>
            <person name="Kowbel D.J."/>
        </authorList>
    </citation>
    <scope>NUCLEOTIDE SEQUENCE [GENOMIC DNA]</scope>
</reference>
<keyword id="KW-0249">Electron transport</keyword>
<keyword id="KW-0472">Membrane</keyword>
<keyword id="KW-0496">Mitochondrion</keyword>
<keyword id="KW-0999">Mitochondrion inner membrane</keyword>
<keyword id="KW-0520">NAD</keyword>
<keyword id="KW-0679">Respiratory chain</keyword>
<keyword id="KW-1278">Translocase</keyword>
<keyword id="KW-0812">Transmembrane</keyword>
<keyword id="KW-1133">Transmembrane helix</keyword>
<keyword id="KW-0813">Transport</keyword>
<keyword id="KW-0830">Ubiquinone</keyword>
<accession>P24999</accession>
<comment type="function">
    <text evidence="1">Core subunit of the mitochondrial membrane respiratory chain NADH dehydrogenase (Complex I) that is believed to belong to the minimal assembly required for catalysis. Complex I functions in the transfer of electrons from NADH to the respiratory chain. The immediate electron acceptor for the enzyme is believed to be ubiquinone (By similarity).</text>
</comment>
<comment type="catalytic activity">
    <reaction>
        <text>a ubiquinone + NADH + 5 H(+)(in) = a ubiquinol + NAD(+) + 4 H(+)(out)</text>
        <dbReference type="Rhea" id="RHEA:29091"/>
        <dbReference type="Rhea" id="RHEA-COMP:9565"/>
        <dbReference type="Rhea" id="RHEA-COMP:9566"/>
        <dbReference type="ChEBI" id="CHEBI:15378"/>
        <dbReference type="ChEBI" id="CHEBI:16389"/>
        <dbReference type="ChEBI" id="CHEBI:17976"/>
        <dbReference type="ChEBI" id="CHEBI:57540"/>
        <dbReference type="ChEBI" id="CHEBI:57945"/>
        <dbReference type="EC" id="7.1.1.2"/>
    </reaction>
</comment>
<comment type="subcellular location">
    <subcellularLocation>
        <location evidence="1">Mitochondrion inner membrane</location>
        <topology evidence="1">Multi-pass membrane protein</topology>
    </subcellularLocation>
</comment>
<comment type="similarity">
    <text evidence="3">Belongs to the complex I subunit 5 family.</text>
</comment>
<sequence length="30" mass="3467">MPLNIQNIIIIINSSLIIILFSSIFFFQLT</sequence>
<dbReference type="EC" id="7.1.1.2"/>
<dbReference type="EMBL" id="X55516">
    <property type="protein sequence ID" value="CAA39133.1"/>
    <property type="molecule type" value="Genomic_DNA"/>
</dbReference>
<dbReference type="PIR" id="S14214">
    <property type="entry name" value="S14214"/>
</dbReference>
<dbReference type="GO" id="GO:0005743">
    <property type="term" value="C:mitochondrial inner membrane"/>
    <property type="evidence" value="ECO:0007669"/>
    <property type="project" value="UniProtKB-SubCell"/>
</dbReference>
<dbReference type="GO" id="GO:0008137">
    <property type="term" value="F:NADH dehydrogenase (ubiquinone) activity"/>
    <property type="evidence" value="ECO:0007669"/>
    <property type="project" value="UniProtKB-EC"/>
</dbReference>